<keyword id="KW-0963">Cytoplasm</keyword>
<keyword id="KW-0597">Phosphoprotein</keyword>
<keyword id="KW-1185">Reference proteome</keyword>
<keyword id="KW-0688">Ribosomal frameshifting</keyword>
<keyword id="KW-0694">RNA-binding</keyword>
<keyword id="KW-0814">Transposable element</keyword>
<sequence length="440" mass="49005">MESQQLSNYPQISHGSACASVTSKEVHTNQDPLDVSASKTEECEKASTKANSQQTTTPASSAVPENPHHASPQPASVPPPQNGPYPQQCMMTQNQANPSGWSFYGHPSMIPYTPYQMSPMYFPPGPQSQFPQYPSSVGTPLSTPSPESGNTFTDSSSADSDMTSTKKYVRPPPMLTSPNDFPNWVKTYIKFLQNSNLGGIIPTVNGKPVRQITDDELTFLYNTFQIFAPSQFLPTWVKDILSVDYTDIMKILSKSIEKMQSDTQEANDIVTLANLQYNGSTPADAFETKVTNIINRLNNNGIHINNKVACQLIMRGLSGEYKFLRYTRHRHLNMTVAELFLDIHAIYEEQQGSRNSKPNYRRNLSDEKNDSRSYTNTTKPKVIARNPQKTNNSKSKTARAHNVSTSNNSPSTDNDSISKSTTEPIQLNNKHDLHLRPGTY</sequence>
<gene>
    <name type="primary">TY1A-OL</name>
    <name type="synonym">YOLWTy1-1 GAG</name>
    <name type="ordered locus">YOL103W-A</name>
    <name type="ORF">HRA440</name>
</gene>
<name>YO11A_YEAST</name>
<feature type="chain" id="PRO_0000279158" description="Transposon Ty1-OL Gag polyprotein">
    <location>
        <begin position="1"/>
        <end position="440"/>
    </location>
</feature>
<feature type="chain" id="PRO_0000279159" description="Capsid protein" evidence="1">
    <location>
        <begin position="1"/>
        <end position="401"/>
    </location>
</feature>
<feature type="peptide" id="PRO_0000279160" description="Gag-p4" evidence="1">
    <location>
        <begin position="402"/>
        <end position="440"/>
    </location>
</feature>
<feature type="region of interest" description="Disordered" evidence="3">
    <location>
        <begin position="1"/>
        <end position="93"/>
    </location>
</feature>
<feature type="region of interest" description="Disordered" evidence="3">
    <location>
        <begin position="126"/>
        <end position="173"/>
    </location>
</feature>
<feature type="region of interest" description="RNA-binding" evidence="1">
    <location>
        <begin position="299"/>
        <end position="401"/>
    </location>
</feature>
<feature type="region of interest" description="Disordered" evidence="3">
    <location>
        <begin position="352"/>
        <end position="440"/>
    </location>
</feature>
<feature type="compositionally biased region" description="Polar residues" evidence="3">
    <location>
        <begin position="1"/>
        <end position="23"/>
    </location>
</feature>
<feature type="compositionally biased region" description="Polar residues" evidence="3">
    <location>
        <begin position="48"/>
        <end position="60"/>
    </location>
</feature>
<feature type="compositionally biased region" description="Polar residues" evidence="3">
    <location>
        <begin position="127"/>
        <end position="152"/>
    </location>
</feature>
<feature type="compositionally biased region" description="Low complexity" evidence="3">
    <location>
        <begin position="153"/>
        <end position="165"/>
    </location>
</feature>
<feature type="compositionally biased region" description="Low complexity" evidence="3">
    <location>
        <begin position="402"/>
        <end position="418"/>
    </location>
</feature>
<feature type="compositionally biased region" description="Polar residues" evidence="3">
    <location>
        <begin position="419"/>
        <end position="428"/>
    </location>
</feature>
<feature type="compositionally biased region" description="Basic and acidic residues" evidence="3">
    <location>
        <begin position="429"/>
        <end position="440"/>
    </location>
</feature>
<feature type="site" description="Cleavage; by Ty1 protease" evidence="1">
    <location>
        <begin position="401"/>
        <end position="402"/>
    </location>
</feature>
<feature type="modified residue" description="Phosphoserine" evidence="2">
    <location>
        <position position="416"/>
    </location>
</feature>
<protein>
    <recommendedName>
        <fullName>Transposon Ty1-OL Gag polyprotein</fullName>
    </recommendedName>
    <alternativeName>
        <fullName>Gag-p49</fullName>
    </alternativeName>
    <alternativeName>
        <fullName>Transposon Ty1 protein A</fullName>
        <shortName>TY1A</shortName>
        <shortName>TYA</shortName>
    </alternativeName>
    <alternativeName>
        <fullName>p58</fullName>
    </alternativeName>
    <component>
        <recommendedName>
            <fullName>Capsid protein</fullName>
            <shortName>CA</shortName>
        </recommendedName>
        <alternativeName>
            <fullName>Gag-p45</fullName>
        </alternativeName>
        <alternativeName>
            <fullName>p54</fullName>
        </alternativeName>
    </component>
    <component>
        <recommendedName>
            <fullName>Gag-p4</fullName>
        </recommendedName>
    </component>
</protein>
<dbReference type="EMBL" id="Z48149">
    <property type="protein sequence ID" value="CAA88157.1"/>
    <property type="molecule type" value="Genomic_DNA"/>
</dbReference>
<dbReference type="EMBL" id="Z74845">
    <property type="protein sequence ID" value="CAA99117.1"/>
    <property type="molecule type" value="Genomic_DNA"/>
</dbReference>
<dbReference type="EMBL" id="Z74846">
    <property type="protein sequence ID" value="CAA99121.1"/>
    <property type="molecule type" value="Genomic_DNA"/>
</dbReference>
<dbReference type="EMBL" id="BK006948">
    <property type="protein sequence ID" value="DAA10680.1"/>
    <property type="molecule type" value="Genomic_DNA"/>
</dbReference>
<dbReference type="PIR" id="S51894">
    <property type="entry name" value="S51894"/>
</dbReference>
<dbReference type="RefSeq" id="NP_058182.1">
    <molecule id="Q92392-1"/>
    <property type="nucleotide sequence ID" value="NM_001184383.1"/>
</dbReference>
<dbReference type="SMR" id="Q92392"/>
<dbReference type="BioGRID" id="34298">
    <property type="interactions" value="13"/>
</dbReference>
<dbReference type="FunCoup" id="Q92392">
    <property type="interactions" value="77"/>
</dbReference>
<dbReference type="IntAct" id="Q92392">
    <property type="interactions" value="3"/>
</dbReference>
<dbReference type="CarbonylDB" id="Q92392"/>
<dbReference type="GlyGen" id="Q92392">
    <property type="glycosylation" value="3 sites, 1 O-linked glycan (1 site)"/>
</dbReference>
<dbReference type="PaxDb" id="4932-YOL103W-A"/>
<dbReference type="PeptideAtlas" id="Q92392"/>
<dbReference type="GeneID" id="854048"/>
<dbReference type="KEGG" id="sce:YOL103W-A"/>
<dbReference type="AGR" id="SGD:S000007349"/>
<dbReference type="SGD" id="S000007349">
    <property type="gene designation" value="YOL103W-A"/>
</dbReference>
<dbReference type="VEuPathDB" id="FungiDB:YOL103W-A"/>
<dbReference type="eggNOG" id="KOG0017">
    <property type="taxonomic scope" value="Eukaryota"/>
</dbReference>
<dbReference type="HOGENOM" id="CLU_045291_1_0_1"/>
<dbReference type="InParanoid" id="Q92392"/>
<dbReference type="OrthoDB" id="4046078at2759"/>
<dbReference type="Proteomes" id="UP000002311">
    <property type="component" value="Chromosome XV"/>
</dbReference>
<dbReference type="RNAct" id="Q92392">
    <property type="molecule type" value="protein"/>
</dbReference>
<dbReference type="GO" id="GO:0005737">
    <property type="term" value="C:cytoplasm"/>
    <property type="evidence" value="ECO:0007669"/>
    <property type="project" value="UniProtKB-SubCell"/>
</dbReference>
<dbReference type="GO" id="GO:0003723">
    <property type="term" value="F:RNA binding"/>
    <property type="evidence" value="ECO:0007669"/>
    <property type="project" value="UniProtKB-KW"/>
</dbReference>
<dbReference type="GO" id="GO:0075523">
    <property type="term" value="P:viral translational frameshifting"/>
    <property type="evidence" value="ECO:0007669"/>
    <property type="project" value="UniProtKB-KW"/>
</dbReference>
<dbReference type="InterPro" id="IPR015820">
    <property type="entry name" value="TYA"/>
</dbReference>
<dbReference type="Pfam" id="PF01021">
    <property type="entry name" value="TYA"/>
    <property type="match status" value="1"/>
</dbReference>
<proteinExistence type="evidence at transcript level"/>
<reference key="1">
    <citation type="journal article" date="1995" name="Yeast">
        <title>Sequence analysis of a 44 kb DNA fragment of yeast chromosome XV including the Ty1-H3 retrotransposon, the suf1(+) frameshift suppressor gene for tRNA-Gly, the yeast transfer RNA-Thr-1a and a delta element.</title>
        <authorList>
            <person name="Vandenbol M."/>
            <person name="Durand P."/>
            <person name="Portetelle D."/>
            <person name="Hilger F."/>
        </authorList>
    </citation>
    <scope>NUCLEOTIDE SEQUENCE [GENOMIC DNA]</scope>
</reference>
<reference key="2">
    <citation type="journal article" date="1997" name="Nature">
        <title>The nucleotide sequence of Saccharomyces cerevisiae chromosome XV.</title>
        <authorList>
            <person name="Dujon B."/>
            <person name="Albermann K."/>
            <person name="Aldea M."/>
            <person name="Alexandraki D."/>
            <person name="Ansorge W."/>
            <person name="Arino J."/>
            <person name="Benes V."/>
            <person name="Bohn C."/>
            <person name="Bolotin-Fukuhara M."/>
            <person name="Bordonne R."/>
            <person name="Boyer J."/>
            <person name="Camasses A."/>
            <person name="Casamayor A."/>
            <person name="Casas C."/>
            <person name="Cheret G."/>
            <person name="Cziepluch C."/>
            <person name="Daignan-Fornier B."/>
            <person name="Dang V.-D."/>
            <person name="de Haan M."/>
            <person name="Delius H."/>
            <person name="Durand P."/>
            <person name="Fairhead C."/>
            <person name="Feldmann H."/>
            <person name="Gaillon L."/>
            <person name="Galisson F."/>
            <person name="Gamo F.-J."/>
            <person name="Gancedo C."/>
            <person name="Goffeau A."/>
            <person name="Goulding S.E."/>
            <person name="Grivell L.A."/>
            <person name="Habbig B."/>
            <person name="Hand N.J."/>
            <person name="Hani J."/>
            <person name="Hattenhorst U."/>
            <person name="Hebling U."/>
            <person name="Hernando Y."/>
            <person name="Herrero E."/>
            <person name="Heumann K."/>
            <person name="Hiesel R."/>
            <person name="Hilger F."/>
            <person name="Hofmann B."/>
            <person name="Hollenberg C.P."/>
            <person name="Hughes B."/>
            <person name="Jauniaux J.-C."/>
            <person name="Kalogeropoulos A."/>
            <person name="Katsoulou C."/>
            <person name="Kordes E."/>
            <person name="Lafuente M.J."/>
            <person name="Landt O."/>
            <person name="Louis E.J."/>
            <person name="Maarse A.C."/>
            <person name="Madania A."/>
            <person name="Mannhaupt G."/>
            <person name="Marck C."/>
            <person name="Martin R.P."/>
            <person name="Mewes H.-W."/>
            <person name="Michaux G."/>
            <person name="Paces V."/>
            <person name="Parle-McDermott A.G."/>
            <person name="Pearson B.M."/>
            <person name="Perrin A."/>
            <person name="Pettersson B."/>
            <person name="Poch O."/>
            <person name="Pohl T.M."/>
            <person name="Poirey R."/>
            <person name="Portetelle D."/>
            <person name="Pujol A."/>
            <person name="Purnelle B."/>
            <person name="Ramezani Rad M."/>
            <person name="Rechmann S."/>
            <person name="Schwager C."/>
            <person name="Schweizer M."/>
            <person name="Sor F."/>
            <person name="Sterky F."/>
            <person name="Tarassov I.A."/>
            <person name="Teodoru C."/>
            <person name="Tettelin H."/>
            <person name="Thierry A."/>
            <person name="Tobiasch E."/>
            <person name="Tzermia M."/>
            <person name="Uhlen M."/>
            <person name="Unseld M."/>
            <person name="Valens M."/>
            <person name="Vandenbol M."/>
            <person name="Vetter I."/>
            <person name="Vlcek C."/>
            <person name="Voet M."/>
            <person name="Volckaert G."/>
            <person name="Voss H."/>
            <person name="Wambutt R."/>
            <person name="Wedler H."/>
            <person name="Wiemann S."/>
            <person name="Winsor B."/>
            <person name="Wolfe K.H."/>
            <person name="Zollner A."/>
            <person name="Zumstein E."/>
            <person name="Kleine K."/>
        </authorList>
    </citation>
    <scope>NUCLEOTIDE SEQUENCE [LARGE SCALE GENOMIC DNA]</scope>
    <source>
        <strain>ATCC 204508 / S288c</strain>
    </source>
</reference>
<reference key="3">
    <citation type="journal article" date="2014" name="G3 (Bethesda)">
        <title>The reference genome sequence of Saccharomyces cerevisiae: Then and now.</title>
        <authorList>
            <person name="Engel S.R."/>
            <person name="Dietrich F.S."/>
            <person name="Fisk D.G."/>
            <person name="Binkley G."/>
            <person name="Balakrishnan R."/>
            <person name="Costanzo M.C."/>
            <person name="Dwight S.S."/>
            <person name="Hitz B.C."/>
            <person name="Karra K."/>
            <person name="Nash R.S."/>
            <person name="Weng S."/>
            <person name="Wong E.D."/>
            <person name="Lloyd P."/>
            <person name="Skrzypek M.S."/>
            <person name="Miyasato S.R."/>
            <person name="Simison M."/>
            <person name="Cherry J.M."/>
        </authorList>
    </citation>
    <scope>GENOME REANNOTATION</scope>
    <source>
        <strain>ATCC 204508 / S288c</strain>
    </source>
</reference>
<reference key="4">
    <citation type="journal article" date="1998" name="Genome Res.">
        <title>Transposable elements and genome organization: a comprehensive survey of retrotransposons revealed by the complete Saccharomyces cerevisiae genome sequence.</title>
        <authorList>
            <person name="Kim J.M."/>
            <person name="Vanguri S."/>
            <person name="Boeke J.D."/>
            <person name="Gabriel A."/>
            <person name="Voytas D.F."/>
        </authorList>
    </citation>
    <scope>NOMENCLATURE</scope>
</reference>
<reference key="5">
    <citation type="journal article" date="2002" name="Mol. Cell. Biol.">
        <title>Differential effects of chromatin and Gcn4 on the 50-fold range of expression among individual yeast Ty1 retrotransposons.</title>
        <authorList>
            <person name="Morillon A."/>
            <person name="Benard L."/>
            <person name="Springer M."/>
            <person name="Lesage P."/>
        </authorList>
    </citation>
    <scope>INDUCTION</scope>
</reference>
<reference key="6">
    <citation type="journal article" date="2005" name="Cytogenet. Genome Res.">
        <title>Happy together: the life and times of Ty retrotransposons and their hosts.</title>
        <authorList>
            <person name="Lesage P."/>
            <person name="Todeschini A.L."/>
        </authorList>
    </citation>
    <scope>REVIEW</scope>
</reference>
<organism>
    <name type="scientific">Saccharomyces cerevisiae (strain ATCC 204508 / S288c)</name>
    <name type="common">Baker's yeast</name>
    <dbReference type="NCBI Taxonomy" id="559292"/>
    <lineage>
        <taxon>Eukaryota</taxon>
        <taxon>Fungi</taxon>
        <taxon>Dikarya</taxon>
        <taxon>Ascomycota</taxon>
        <taxon>Saccharomycotina</taxon>
        <taxon>Saccharomycetes</taxon>
        <taxon>Saccharomycetales</taxon>
        <taxon>Saccharomycetaceae</taxon>
        <taxon>Saccharomyces</taxon>
    </lineage>
</organism>
<accession>Q92392</accession>
<accession>D6W1W4</accession>
<comment type="function">
    <text evidence="1">Capsid protein (CA) is the structural component of the virus-like particle (VLP), forming the shell that encapsulates the retrotransposons dimeric RNA genome. The particles are assembled from trimer-clustered units and there are holes in the capsid shells that allow for the diffusion of macromolecules. CA also has nucleocapsid-like chaperone activity, promoting primer tRNA(i)-Met annealing to the multipartite primer-binding site (PBS), dimerization of Ty1 RNA and initiation of reverse transcription (By similarity).</text>
</comment>
<comment type="subunit">
    <text evidence="1">Homotrimer.</text>
</comment>
<comment type="subcellular location">
    <subcellularLocation>
        <location evidence="1">Cytoplasm</location>
    </subcellularLocation>
</comment>
<comment type="alternative products">
    <event type="ribosomal frameshifting"/>
    <isoform>
        <id>Q92392-1</id>
        <name>Transposon Ty1-OL Gag polyprotein</name>
        <sequence type="displayed"/>
    </isoform>
    <isoform>
        <id>Q12273-1</id>
        <name>Transposon Ty1-OL Gag-Pol polyprotein</name>
        <sequence type="external"/>
    </isoform>
    <text evidence="1">The Gag-Pol polyprotein is generated by a +1 ribosomal frameshift. The ratio of Gag:Gag-Pol varies between 20:1 and 5:1 (By similarity).</text>
</comment>
<comment type="induction">
    <text evidence="4">Ty1-OL is a weakly expressed element. Induced under amino acid starvation conditions by GCN4.</text>
</comment>
<comment type="domain">
    <text evidence="1">The C-terminal RNA-binding region of CA is sufficient for all its nucleocapsid-like chaperone activities.</text>
</comment>
<comment type="miscellaneous">
    <text>Retrotransposons are mobile genetic entities that are able to replicate via an RNA intermediate and a reverse transcription step. In contrast to retroviruses, retrotransposons are non-infectious, lack an envelope and remain intracellular. Ty1 retrotransposons belong to the copia elements (pseudoviridae).</text>
</comment>
<comment type="miscellaneous">
    <molecule>Isoform Transposon Ty1-OL Gag polyprotein</molecule>
    <text>Produced by conventional translation.</text>
</comment>
<evidence type="ECO:0000250" key="1"/>
<evidence type="ECO:0000250" key="2">
    <source>
        <dbReference type="UniProtKB" id="Q12441"/>
    </source>
</evidence>
<evidence type="ECO:0000256" key="3">
    <source>
        <dbReference type="SAM" id="MobiDB-lite"/>
    </source>
</evidence>
<evidence type="ECO:0000269" key="4">
    <source>
    </source>
</evidence>